<keyword id="KW-0521">NADP</keyword>
<keyword id="KW-0560">Oxidoreductase</keyword>
<keyword id="KW-0627">Porphyrin biosynthesis</keyword>
<keyword id="KW-1185">Reference proteome</keyword>
<accession>Q8ZYV6</accession>
<gene>
    <name evidence="1" type="primary">hemA</name>
    <name type="ordered locus">PAE0601</name>
</gene>
<feature type="chain" id="PRO_0000114108" description="Glutamyl-tRNA reductase">
    <location>
        <begin position="1"/>
        <end position="397"/>
    </location>
</feature>
<feature type="active site" description="Nucleophile" evidence="1">
    <location>
        <position position="48"/>
    </location>
</feature>
<feature type="binding site" evidence="1">
    <location>
        <begin position="47"/>
        <end position="50"/>
    </location>
    <ligand>
        <name>substrate</name>
    </ligand>
</feature>
<feature type="binding site" evidence="1">
    <location>
        <position position="98"/>
    </location>
    <ligand>
        <name>substrate</name>
    </ligand>
</feature>
<feature type="binding site" evidence="1">
    <location>
        <begin position="103"/>
        <end position="105"/>
    </location>
    <ligand>
        <name>substrate</name>
    </ligand>
</feature>
<feature type="binding site" evidence="1">
    <location>
        <position position="109"/>
    </location>
    <ligand>
        <name>substrate</name>
    </ligand>
</feature>
<feature type="binding site" evidence="1">
    <location>
        <begin position="177"/>
        <end position="182"/>
    </location>
    <ligand>
        <name>NADP(+)</name>
        <dbReference type="ChEBI" id="CHEBI:58349"/>
    </ligand>
</feature>
<feature type="site" description="Important for activity" evidence="1">
    <location>
        <position position="88"/>
    </location>
</feature>
<evidence type="ECO:0000255" key="1">
    <source>
        <dbReference type="HAMAP-Rule" id="MF_00087"/>
    </source>
</evidence>
<name>HEM1_PYRAE</name>
<proteinExistence type="inferred from homology"/>
<organism>
    <name type="scientific">Pyrobaculum aerophilum (strain ATCC 51768 / DSM 7523 / JCM 9630 / CIP 104966 / NBRC 100827 / IM2)</name>
    <dbReference type="NCBI Taxonomy" id="178306"/>
    <lineage>
        <taxon>Archaea</taxon>
        <taxon>Thermoproteota</taxon>
        <taxon>Thermoprotei</taxon>
        <taxon>Thermoproteales</taxon>
        <taxon>Thermoproteaceae</taxon>
        <taxon>Pyrobaculum</taxon>
    </lineage>
</organism>
<reference key="1">
    <citation type="journal article" date="2002" name="Proc. Natl. Acad. Sci. U.S.A.">
        <title>Genome sequence of the hyperthermophilic crenarchaeon Pyrobaculum aerophilum.</title>
        <authorList>
            <person name="Fitz-Gibbon S.T."/>
            <person name="Ladner H."/>
            <person name="Kim U.-J."/>
            <person name="Stetter K.O."/>
            <person name="Simon M.I."/>
            <person name="Miller J.H."/>
        </authorList>
    </citation>
    <scope>NUCLEOTIDE SEQUENCE [LARGE SCALE GENOMIC DNA]</scope>
    <source>
        <strain>ATCC 51768 / DSM 7523 / JCM 9630 / CIP 104966 / NBRC 100827 / IM2</strain>
    </source>
</reference>
<sequence length="397" mass="43630">MDLLAPLAAVILTYREVDADTLGRVGEEMKKCIEILGVKRPMFVLHTCGRVEAYLYNASEEEINSVTLRYRRYAESIRVVRGVEAARHLFRVAAGLESMLIGETDILGQVEEAFDRQVKAGFTKGLLKTIVERAIRAGKRVRAETGISRGPAGLGSLSIIYVSQLLDLTKSKVAVLGAGAVGAGLAKELAERGVAKLYILNRTLEKAVEIANKLGAEARPLTREEVQKCLMECDVVFSSVHSLEYVIDRVPDGAVVKIIVDLGVPQTVAPGLPVRVVRLSDLKQLAEKYSEARKQEAARAEAIVEEELAKLPQILARRYIEEAVSHLLEKAMEVAEEEGKRAGCPTAVLAARTTVKRTLFPIIEVLKKMAEDGRLEDAVKVVEILRSQKPLLRQSEE</sequence>
<dbReference type="EC" id="1.2.1.70" evidence="1"/>
<dbReference type="EMBL" id="AE009441">
    <property type="protein sequence ID" value="AAL62887.1"/>
    <property type="molecule type" value="Genomic_DNA"/>
</dbReference>
<dbReference type="RefSeq" id="WP_011007359.1">
    <property type="nucleotide sequence ID" value="NC_003364.1"/>
</dbReference>
<dbReference type="SMR" id="Q8ZYV6"/>
<dbReference type="FunCoup" id="Q8ZYV6">
    <property type="interactions" value="79"/>
</dbReference>
<dbReference type="STRING" id="178306.PAE0601"/>
<dbReference type="EnsemblBacteria" id="AAL62887">
    <property type="protein sequence ID" value="AAL62887"/>
    <property type="gene ID" value="PAE0601"/>
</dbReference>
<dbReference type="GeneID" id="1465112"/>
<dbReference type="KEGG" id="pai:PAE0601"/>
<dbReference type="PATRIC" id="fig|178306.9.peg.431"/>
<dbReference type="eggNOG" id="arCOG01036">
    <property type="taxonomic scope" value="Archaea"/>
</dbReference>
<dbReference type="HOGENOM" id="CLU_035113_0_0_2"/>
<dbReference type="InParanoid" id="Q8ZYV6"/>
<dbReference type="UniPathway" id="UPA00251">
    <property type="reaction ID" value="UER00316"/>
</dbReference>
<dbReference type="Proteomes" id="UP000002439">
    <property type="component" value="Chromosome"/>
</dbReference>
<dbReference type="GO" id="GO:0008883">
    <property type="term" value="F:glutamyl-tRNA reductase activity"/>
    <property type="evidence" value="ECO:0000318"/>
    <property type="project" value="GO_Central"/>
</dbReference>
<dbReference type="GO" id="GO:0050661">
    <property type="term" value="F:NADP binding"/>
    <property type="evidence" value="ECO:0007669"/>
    <property type="project" value="InterPro"/>
</dbReference>
<dbReference type="GO" id="GO:0019353">
    <property type="term" value="P:protoporphyrinogen IX biosynthetic process from glutamate"/>
    <property type="evidence" value="ECO:0000318"/>
    <property type="project" value="GO_Central"/>
</dbReference>
<dbReference type="CDD" id="cd05213">
    <property type="entry name" value="NAD_bind_Glutamyl_tRNA_reduct"/>
    <property type="match status" value="1"/>
</dbReference>
<dbReference type="Gene3D" id="3.30.460.30">
    <property type="entry name" value="Glutamyl-tRNA reductase, N-terminal domain"/>
    <property type="match status" value="1"/>
</dbReference>
<dbReference type="Gene3D" id="3.40.50.720">
    <property type="entry name" value="NAD(P)-binding Rossmann-like Domain"/>
    <property type="match status" value="1"/>
</dbReference>
<dbReference type="HAMAP" id="MF_00087">
    <property type="entry name" value="Glu_tRNA_reductase"/>
    <property type="match status" value="1"/>
</dbReference>
<dbReference type="InterPro" id="IPR000343">
    <property type="entry name" value="4pyrrol_synth_GluRdtase"/>
</dbReference>
<dbReference type="InterPro" id="IPR015895">
    <property type="entry name" value="4pyrrol_synth_GluRdtase_N"/>
</dbReference>
<dbReference type="InterPro" id="IPR018214">
    <property type="entry name" value="GluRdtase_CS"/>
</dbReference>
<dbReference type="InterPro" id="IPR036453">
    <property type="entry name" value="GluRdtase_dimer_dom_sf"/>
</dbReference>
<dbReference type="InterPro" id="IPR036343">
    <property type="entry name" value="GluRdtase_N_sf"/>
</dbReference>
<dbReference type="InterPro" id="IPR036291">
    <property type="entry name" value="NAD(P)-bd_dom_sf"/>
</dbReference>
<dbReference type="InterPro" id="IPR006151">
    <property type="entry name" value="Shikm_DH/Glu-tRNA_Rdtase"/>
</dbReference>
<dbReference type="PANTHER" id="PTHR43013">
    <property type="entry name" value="GLUTAMYL-TRNA REDUCTASE"/>
    <property type="match status" value="1"/>
</dbReference>
<dbReference type="PANTHER" id="PTHR43013:SF1">
    <property type="entry name" value="GLUTAMYL-TRNA REDUCTASE"/>
    <property type="match status" value="1"/>
</dbReference>
<dbReference type="Pfam" id="PF05201">
    <property type="entry name" value="GlutR_N"/>
    <property type="match status" value="1"/>
</dbReference>
<dbReference type="Pfam" id="PF01488">
    <property type="entry name" value="Shikimate_DH"/>
    <property type="match status" value="1"/>
</dbReference>
<dbReference type="PIRSF" id="PIRSF000445">
    <property type="entry name" value="4pyrrol_synth_GluRdtase"/>
    <property type="match status" value="1"/>
</dbReference>
<dbReference type="SUPFAM" id="SSF69742">
    <property type="entry name" value="Glutamyl tRNA-reductase catalytic, N-terminal domain"/>
    <property type="match status" value="1"/>
</dbReference>
<dbReference type="SUPFAM" id="SSF69075">
    <property type="entry name" value="Glutamyl tRNA-reductase dimerization domain"/>
    <property type="match status" value="1"/>
</dbReference>
<dbReference type="SUPFAM" id="SSF51735">
    <property type="entry name" value="NAD(P)-binding Rossmann-fold domains"/>
    <property type="match status" value="1"/>
</dbReference>
<dbReference type="PROSITE" id="PS00747">
    <property type="entry name" value="GLUTR"/>
    <property type="match status" value="1"/>
</dbReference>
<protein>
    <recommendedName>
        <fullName evidence="1">Glutamyl-tRNA reductase</fullName>
        <shortName evidence="1">GluTR</shortName>
        <ecNumber evidence="1">1.2.1.70</ecNumber>
    </recommendedName>
</protein>
<comment type="function">
    <text evidence="1">Catalyzes the NADPH-dependent reduction of glutamyl-tRNA(Glu) to glutamate 1-semialdehyde (GSA).</text>
</comment>
<comment type="catalytic activity">
    <reaction evidence="1">
        <text>(S)-4-amino-5-oxopentanoate + tRNA(Glu) + NADP(+) = L-glutamyl-tRNA(Glu) + NADPH + H(+)</text>
        <dbReference type="Rhea" id="RHEA:12344"/>
        <dbReference type="Rhea" id="RHEA-COMP:9663"/>
        <dbReference type="Rhea" id="RHEA-COMP:9680"/>
        <dbReference type="ChEBI" id="CHEBI:15378"/>
        <dbReference type="ChEBI" id="CHEBI:57501"/>
        <dbReference type="ChEBI" id="CHEBI:57783"/>
        <dbReference type="ChEBI" id="CHEBI:58349"/>
        <dbReference type="ChEBI" id="CHEBI:78442"/>
        <dbReference type="ChEBI" id="CHEBI:78520"/>
        <dbReference type="EC" id="1.2.1.70"/>
    </reaction>
</comment>
<comment type="pathway">
    <text evidence="1">Porphyrin-containing compound metabolism; protoporphyrin-IX biosynthesis; 5-aminolevulinate from L-glutamyl-tRNA(Glu): step 1/2.</text>
</comment>
<comment type="subunit">
    <text evidence="1">Homodimer.</text>
</comment>
<comment type="domain">
    <text evidence="1">Possesses an unusual extended V-shaped dimeric structure with each monomer consisting of three distinct domains arranged along a curved 'spinal' alpha-helix. The N-terminal catalytic domain specifically recognizes the glutamate moiety of the substrate. The second domain is the NADPH-binding domain, and the third C-terminal domain is responsible for dimerization.</text>
</comment>
<comment type="miscellaneous">
    <text evidence="1">During catalysis, the active site Cys acts as a nucleophile attacking the alpha-carbonyl group of tRNA-bound glutamate with the formation of a thioester intermediate between enzyme and glutamate, and the concomitant release of tRNA(Glu). The thioester intermediate is finally reduced by direct hydride transfer from NADPH, to form the product GSA.</text>
</comment>
<comment type="similarity">
    <text evidence="1">Belongs to the glutamyl-tRNA reductase family.</text>
</comment>